<comment type="function">
    <text evidence="2">Component of the acetyl coenzyme A carboxylase (ACC) complex. Biotin carboxylase (BC) catalyzes the carboxylation of biotin on its carrier protein (BCCP) and then the CO(2) group is transferred by the transcarboxylase to acetyl-CoA to form malonyl-CoA.</text>
</comment>
<comment type="catalytic activity">
    <reaction evidence="2">
        <text>N(6)-carboxybiotinyl-L-lysyl-[protein] + acetyl-CoA = N(6)-biotinyl-L-lysyl-[protein] + malonyl-CoA</text>
        <dbReference type="Rhea" id="RHEA:54728"/>
        <dbReference type="Rhea" id="RHEA-COMP:10505"/>
        <dbReference type="Rhea" id="RHEA-COMP:10506"/>
        <dbReference type="ChEBI" id="CHEBI:57288"/>
        <dbReference type="ChEBI" id="CHEBI:57384"/>
        <dbReference type="ChEBI" id="CHEBI:83144"/>
        <dbReference type="ChEBI" id="CHEBI:83145"/>
        <dbReference type="EC" id="2.1.3.15"/>
    </reaction>
</comment>
<comment type="cofactor">
    <cofactor evidence="2">
        <name>Zn(2+)</name>
        <dbReference type="ChEBI" id="CHEBI:29105"/>
    </cofactor>
    <text evidence="2">Binds 1 zinc ion per subunit.</text>
</comment>
<comment type="pathway">
    <text evidence="2">Lipid metabolism; malonyl-CoA biosynthesis; malonyl-CoA from acetyl-CoA: step 1/1.</text>
</comment>
<comment type="subunit">
    <text evidence="1">Acetyl-CoA carboxylase is a heterohexamer composed of biotin carboxyl carrier protein, biotin carboxylase and 2 subunits each of ACCase subunit alpha and ACCase plastid-coded subunit beta (accD).</text>
</comment>
<comment type="subcellular location">
    <subcellularLocation>
        <location evidence="2">Plastid</location>
        <location evidence="2">Chloroplast stroma</location>
    </subcellularLocation>
</comment>
<comment type="similarity">
    <text evidence="2">Belongs to the AccD/PCCB family.</text>
</comment>
<comment type="sequence caution" evidence="5">
    <conflict type="erroneous initiation">
        <sequence resource="EMBL-CDS" id="BAE48010"/>
    </conflict>
    <text>Extended N-terminus.</text>
</comment>
<feature type="chain" id="PRO_0000359155" description="Acetyl-coenzyme A carboxylase carboxyl transferase subunit beta, chloroplastic">
    <location>
        <begin position="1"/>
        <end position="495"/>
    </location>
</feature>
<feature type="domain" description="CoA carboxyltransferase N-terminal" evidence="3">
    <location>
        <begin position="226"/>
        <end position="495"/>
    </location>
</feature>
<feature type="zinc finger region" description="C4-type" evidence="2">
    <location>
        <begin position="230"/>
        <end position="252"/>
    </location>
</feature>
<feature type="region of interest" description="Disordered" evidence="4">
    <location>
        <begin position="188"/>
        <end position="208"/>
    </location>
</feature>
<feature type="binding site" evidence="2">
    <location>
        <position position="230"/>
    </location>
    <ligand>
        <name>Zn(2+)</name>
        <dbReference type="ChEBI" id="CHEBI:29105"/>
    </ligand>
</feature>
<feature type="binding site" evidence="2">
    <location>
        <position position="233"/>
    </location>
    <ligand>
        <name>Zn(2+)</name>
        <dbReference type="ChEBI" id="CHEBI:29105"/>
    </ligand>
</feature>
<feature type="binding site" evidence="2">
    <location>
        <position position="249"/>
    </location>
    <ligand>
        <name>Zn(2+)</name>
        <dbReference type="ChEBI" id="CHEBI:29105"/>
    </ligand>
</feature>
<feature type="binding site" evidence="2">
    <location>
        <position position="252"/>
    </location>
    <ligand>
        <name>Zn(2+)</name>
        <dbReference type="ChEBI" id="CHEBI:29105"/>
    </ligand>
</feature>
<organism>
    <name type="scientific">Nicotiana tomentosiformis</name>
    <name type="common">Tobacco</name>
    <dbReference type="NCBI Taxonomy" id="4098"/>
    <lineage>
        <taxon>Eukaryota</taxon>
        <taxon>Viridiplantae</taxon>
        <taxon>Streptophyta</taxon>
        <taxon>Embryophyta</taxon>
        <taxon>Tracheophyta</taxon>
        <taxon>Spermatophyta</taxon>
        <taxon>Magnoliopsida</taxon>
        <taxon>eudicotyledons</taxon>
        <taxon>Gunneridae</taxon>
        <taxon>Pentapetalae</taxon>
        <taxon>asterids</taxon>
        <taxon>lamiids</taxon>
        <taxon>Solanales</taxon>
        <taxon>Solanaceae</taxon>
        <taxon>Nicotianoideae</taxon>
        <taxon>Nicotianeae</taxon>
        <taxon>Nicotiana</taxon>
    </lineage>
</organism>
<reference key="1">
    <citation type="journal article" date="2006" name="Mol. Genet. Genomics">
        <title>The chloroplast genome of Nicotiana sylvestris and Nicotiana tomentosiformis: complete sequencing confirms that the Nicotiana sylvestris progenitor is the maternal genome donor of Nicotiana tabacum.</title>
        <authorList>
            <person name="Yukawa M."/>
            <person name="Tsudzuki T."/>
            <person name="Sugiura M."/>
        </authorList>
    </citation>
    <scope>NUCLEOTIDE SEQUENCE [LARGE SCALE GENOMIC DNA]</scope>
</reference>
<protein>
    <recommendedName>
        <fullName evidence="2">Acetyl-coenzyme A carboxylase carboxyl transferase subunit beta, chloroplastic</fullName>
        <shortName evidence="2">ACCase subunit beta</shortName>
        <shortName evidence="2">Acetyl-CoA carboxylase carboxyltransferase subunit beta</shortName>
        <ecNumber evidence="2">2.1.3.15</ecNumber>
    </recommendedName>
</protein>
<accession>Q33C25</accession>
<gene>
    <name evidence="2" type="primary">accD</name>
</gene>
<evidence type="ECO:0000250" key="1"/>
<evidence type="ECO:0000255" key="2">
    <source>
        <dbReference type="HAMAP-Rule" id="MF_01395"/>
    </source>
</evidence>
<evidence type="ECO:0000255" key="3">
    <source>
        <dbReference type="PROSITE-ProRule" id="PRU01136"/>
    </source>
</evidence>
<evidence type="ECO:0000256" key="4">
    <source>
        <dbReference type="SAM" id="MobiDB-lite"/>
    </source>
</evidence>
<evidence type="ECO:0000305" key="5"/>
<keyword id="KW-0067">ATP-binding</keyword>
<keyword id="KW-0150">Chloroplast</keyword>
<keyword id="KW-0275">Fatty acid biosynthesis</keyword>
<keyword id="KW-0276">Fatty acid metabolism</keyword>
<keyword id="KW-0444">Lipid biosynthesis</keyword>
<keyword id="KW-0443">Lipid metabolism</keyword>
<keyword id="KW-0479">Metal-binding</keyword>
<keyword id="KW-0547">Nucleotide-binding</keyword>
<keyword id="KW-0934">Plastid</keyword>
<keyword id="KW-0808">Transferase</keyword>
<keyword id="KW-0862">Zinc</keyword>
<keyword id="KW-0863">Zinc-finger</keyword>
<name>ACCD_NICTO</name>
<geneLocation type="chloroplast"/>
<sequence>MERWWFNSMLFKKEFERRCGLNKSMGSLGPIENTNEDPNRKVKNIHSWRNRDNSSCSNVDYLFGVKDIRNFISDDTFLVSDRNGDSYSIYFDIENHIFEIDNDHSFLSELESSFYSYRNLSYLNNGFRGEDPYYNSYMYDTQYSWNNHINSCIDSYLQSQICIDTSIISGSENYGDSYIYRAICGGESRNSSENEGSSRRTRTKGSDLTIRESSNDLEVTQKYRHLWVQCENCYGLNYKKFFKSKMNICEQCGYHLKMSSSDRIELLIDPGTWDPMDEDMVSLDPIEFHSEEEPYKDRIDSYQRKTGLTEAVQTGIGQLNGIPVAIGVMDFQFMGGSMGSVVGEKITRLIERAANQILPLIIVCASGGARMQEGSLSLMQMAKISSALYDYQLNKKLFYVSILTSPTTGGVTASFGMLGDIIIAEPNAYIAFAGKRVIEQTLNKTVPEGSQAAEYLFQKGLFDLIVPRNLLKSVLSELFKLHAFFPLNQKSSKIK</sequence>
<dbReference type="EC" id="2.1.3.15" evidence="2"/>
<dbReference type="EMBL" id="AB240139">
    <property type="protein sequence ID" value="BAE48010.1"/>
    <property type="status" value="ALT_INIT"/>
    <property type="molecule type" value="Genomic_DNA"/>
</dbReference>
<dbReference type="RefSeq" id="YP_398872.1">
    <property type="nucleotide sequence ID" value="NC_007602.1"/>
</dbReference>
<dbReference type="SMR" id="Q33C25"/>
<dbReference type="GeneID" id="3776376"/>
<dbReference type="KEGG" id="nto:3776376"/>
<dbReference type="OrthoDB" id="1219953at2759"/>
<dbReference type="UniPathway" id="UPA00655">
    <property type="reaction ID" value="UER00711"/>
</dbReference>
<dbReference type="GO" id="GO:0009317">
    <property type="term" value="C:acetyl-CoA carboxylase complex"/>
    <property type="evidence" value="ECO:0007669"/>
    <property type="project" value="InterPro"/>
</dbReference>
<dbReference type="GO" id="GO:0009570">
    <property type="term" value="C:chloroplast stroma"/>
    <property type="evidence" value="ECO:0007669"/>
    <property type="project" value="UniProtKB-SubCell"/>
</dbReference>
<dbReference type="GO" id="GO:0003989">
    <property type="term" value="F:acetyl-CoA carboxylase activity"/>
    <property type="evidence" value="ECO:0007669"/>
    <property type="project" value="InterPro"/>
</dbReference>
<dbReference type="GO" id="GO:0005524">
    <property type="term" value="F:ATP binding"/>
    <property type="evidence" value="ECO:0007669"/>
    <property type="project" value="UniProtKB-KW"/>
</dbReference>
<dbReference type="GO" id="GO:0016743">
    <property type="term" value="F:carboxyl- or carbamoyltransferase activity"/>
    <property type="evidence" value="ECO:0007669"/>
    <property type="project" value="UniProtKB-UniRule"/>
</dbReference>
<dbReference type="GO" id="GO:0008270">
    <property type="term" value="F:zinc ion binding"/>
    <property type="evidence" value="ECO:0007669"/>
    <property type="project" value="UniProtKB-UniRule"/>
</dbReference>
<dbReference type="GO" id="GO:0006633">
    <property type="term" value="P:fatty acid biosynthetic process"/>
    <property type="evidence" value="ECO:0007669"/>
    <property type="project" value="UniProtKB-KW"/>
</dbReference>
<dbReference type="GO" id="GO:2001295">
    <property type="term" value="P:malonyl-CoA biosynthetic process"/>
    <property type="evidence" value="ECO:0007669"/>
    <property type="project" value="UniProtKB-UniRule"/>
</dbReference>
<dbReference type="Gene3D" id="3.90.226.10">
    <property type="entry name" value="2-enoyl-CoA Hydratase, Chain A, domain 1"/>
    <property type="match status" value="1"/>
</dbReference>
<dbReference type="HAMAP" id="MF_01395">
    <property type="entry name" value="AcetylCoA_CT_beta"/>
    <property type="match status" value="1"/>
</dbReference>
<dbReference type="InterPro" id="IPR034733">
    <property type="entry name" value="AcCoA_carboxyl_beta"/>
</dbReference>
<dbReference type="InterPro" id="IPR000438">
    <property type="entry name" value="Acetyl_CoA_COase_Trfase_b_su"/>
</dbReference>
<dbReference type="InterPro" id="IPR029045">
    <property type="entry name" value="ClpP/crotonase-like_dom_sf"/>
</dbReference>
<dbReference type="InterPro" id="IPR011762">
    <property type="entry name" value="COA_CT_N"/>
</dbReference>
<dbReference type="NCBIfam" id="TIGR00515">
    <property type="entry name" value="accD"/>
    <property type="match status" value="1"/>
</dbReference>
<dbReference type="PANTHER" id="PTHR42995">
    <property type="entry name" value="ACETYL-COENZYME A CARBOXYLASE CARBOXYL TRANSFERASE SUBUNIT BETA, CHLOROPLASTIC"/>
    <property type="match status" value="1"/>
</dbReference>
<dbReference type="PANTHER" id="PTHR42995:SF5">
    <property type="entry name" value="ACETYL-COENZYME A CARBOXYLASE CARBOXYL TRANSFERASE SUBUNIT BETA, CHLOROPLASTIC"/>
    <property type="match status" value="1"/>
</dbReference>
<dbReference type="Pfam" id="PF01039">
    <property type="entry name" value="Carboxyl_trans"/>
    <property type="match status" value="1"/>
</dbReference>
<dbReference type="PRINTS" id="PR01070">
    <property type="entry name" value="ACCCTRFRASEB"/>
</dbReference>
<dbReference type="SUPFAM" id="SSF52096">
    <property type="entry name" value="ClpP/crotonase"/>
    <property type="match status" value="1"/>
</dbReference>
<dbReference type="PROSITE" id="PS50980">
    <property type="entry name" value="COA_CT_NTER"/>
    <property type="match status" value="1"/>
</dbReference>
<proteinExistence type="inferred from homology"/>